<accession>Q9Y1A3</accession>
<reference key="1">
    <citation type="journal article" date="1999" name="FEBS Lett.">
        <title>The mitochondrial TIM22 preprotein translocase is highly conserved throughout the eukaryotic kingdom.</title>
        <authorList>
            <person name="Bauer M.F."/>
            <person name="Rothbauer U."/>
            <person name="Muehlenbein N."/>
            <person name="Smith R.J.H."/>
            <person name="Gerbitz K.-D."/>
            <person name="Neupert W."/>
            <person name="Brunner M."/>
            <person name="Hofmann S."/>
        </authorList>
    </citation>
    <scope>NUCLEOTIDE SEQUENCE [MRNA]</scope>
    <source>
        <strain>SD</strain>
    </source>
</reference>
<reference key="2">
    <citation type="journal article" date="2000" name="Science">
        <title>The genome sequence of Drosophila melanogaster.</title>
        <authorList>
            <person name="Adams M.D."/>
            <person name="Celniker S.E."/>
            <person name="Holt R.A."/>
            <person name="Evans C.A."/>
            <person name="Gocayne J.D."/>
            <person name="Amanatides P.G."/>
            <person name="Scherer S.E."/>
            <person name="Li P.W."/>
            <person name="Hoskins R.A."/>
            <person name="Galle R.F."/>
            <person name="George R.A."/>
            <person name="Lewis S.E."/>
            <person name="Richards S."/>
            <person name="Ashburner M."/>
            <person name="Henderson S.N."/>
            <person name="Sutton G.G."/>
            <person name="Wortman J.R."/>
            <person name="Yandell M.D."/>
            <person name="Zhang Q."/>
            <person name="Chen L.X."/>
            <person name="Brandon R.C."/>
            <person name="Rogers Y.-H.C."/>
            <person name="Blazej R.G."/>
            <person name="Champe M."/>
            <person name="Pfeiffer B.D."/>
            <person name="Wan K.H."/>
            <person name="Doyle C."/>
            <person name="Baxter E.G."/>
            <person name="Helt G."/>
            <person name="Nelson C.R."/>
            <person name="Miklos G.L.G."/>
            <person name="Abril J.F."/>
            <person name="Agbayani A."/>
            <person name="An H.-J."/>
            <person name="Andrews-Pfannkoch C."/>
            <person name="Baldwin D."/>
            <person name="Ballew R.M."/>
            <person name="Basu A."/>
            <person name="Baxendale J."/>
            <person name="Bayraktaroglu L."/>
            <person name="Beasley E.M."/>
            <person name="Beeson K.Y."/>
            <person name="Benos P.V."/>
            <person name="Berman B.P."/>
            <person name="Bhandari D."/>
            <person name="Bolshakov S."/>
            <person name="Borkova D."/>
            <person name="Botchan M.R."/>
            <person name="Bouck J."/>
            <person name="Brokstein P."/>
            <person name="Brottier P."/>
            <person name="Burtis K.C."/>
            <person name="Busam D.A."/>
            <person name="Butler H."/>
            <person name="Cadieu E."/>
            <person name="Center A."/>
            <person name="Chandra I."/>
            <person name="Cherry J.M."/>
            <person name="Cawley S."/>
            <person name="Dahlke C."/>
            <person name="Davenport L.B."/>
            <person name="Davies P."/>
            <person name="de Pablos B."/>
            <person name="Delcher A."/>
            <person name="Deng Z."/>
            <person name="Mays A.D."/>
            <person name="Dew I."/>
            <person name="Dietz S.M."/>
            <person name="Dodson K."/>
            <person name="Doup L.E."/>
            <person name="Downes M."/>
            <person name="Dugan-Rocha S."/>
            <person name="Dunkov B.C."/>
            <person name="Dunn P."/>
            <person name="Durbin K.J."/>
            <person name="Evangelista C.C."/>
            <person name="Ferraz C."/>
            <person name="Ferriera S."/>
            <person name="Fleischmann W."/>
            <person name="Fosler C."/>
            <person name="Gabrielian A.E."/>
            <person name="Garg N.S."/>
            <person name="Gelbart W.M."/>
            <person name="Glasser K."/>
            <person name="Glodek A."/>
            <person name="Gong F."/>
            <person name="Gorrell J.H."/>
            <person name="Gu Z."/>
            <person name="Guan P."/>
            <person name="Harris M."/>
            <person name="Harris N.L."/>
            <person name="Harvey D.A."/>
            <person name="Heiman T.J."/>
            <person name="Hernandez J.R."/>
            <person name="Houck J."/>
            <person name="Hostin D."/>
            <person name="Houston K.A."/>
            <person name="Howland T.J."/>
            <person name="Wei M.-H."/>
            <person name="Ibegwam C."/>
            <person name="Jalali M."/>
            <person name="Kalush F."/>
            <person name="Karpen G.H."/>
            <person name="Ke Z."/>
            <person name="Kennison J.A."/>
            <person name="Ketchum K.A."/>
            <person name="Kimmel B.E."/>
            <person name="Kodira C.D."/>
            <person name="Kraft C.L."/>
            <person name="Kravitz S."/>
            <person name="Kulp D."/>
            <person name="Lai Z."/>
            <person name="Lasko P."/>
            <person name="Lei Y."/>
            <person name="Levitsky A.A."/>
            <person name="Li J.H."/>
            <person name="Li Z."/>
            <person name="Liang Y."/>
            <person name="Lin X."/>
            <person name="Liu X."/>
            <person name="Mattei B."/>
            <person name="McIntosh T.C."/>
            <person name="McLeod M.P."/>
            <person name="McPherson D."/>
            <person name="Merkulov G."/>
            <person name="Milshina N.V."/>
            <person name="Mobarry C."/>
            <person name="Morris J."/>
            <person name="Moshrefi A."/>
            <person name="Mount S.M."/>
            <person name="Moy M."/>
            <person name="Murphy B."/>
            <person name="Murphy L."/>
            <person name="Muzny D.M."/>
            <person name="Nelson D.L."/>
            <person name="Nelson D.R."/>
            <person name="Nelson K.A."/>
            <person name="Nixon K."/>
            <person name="Nusskern D.R."/>
            <person name="Pacleb J.M."/>
            <person name="Palazzolo M."/>
            <person name="Pittman G.S."/>
            <person name="Pan S."/>
            <person name="Pollard J."/>
            <person name="Puri V."/>
            <person name="Reese M.G."/>
            <person name="Reinert K."/>
            <person name="Remington K."/>
            <person name="Saunders R.D.C."/>
            <person name="Scheeler F."/>
            <person name="Shen H."/>
            <person name="Shue B.C."/>
            <person name="Siden-Kiamos I."/>
            <person name="Simpson M."/>
            <person name="Skupski M.P."/>
            <person name="Smith T.J."/>
            <person name="Spier E."/>
            <person name="Spradling A.C."/>
            <person name="Stapleton M."/>
            <person name="Strong R."/>
            <person name="Sun E."/>
            <person name="Svirskas R."/>
            <person name="Tector C."/>
            <person name="Turner R."/>
            <person name="Venter E."/>
            <person name="Wang A.H."/>
            <person name="Wang X."/>
            <person name="Wang Z.-Y."/>
            <person name="Wassarman D.A."/>
            <person name="Weinstock G.M."/>
            <person name="Weissenbach J."/>
            <person name="Williams S.M."/>
            <person name="Woodage T."/>
            <person name="Worley K.C."/>
            <person name="Wu D."/>
            <person name="Yang S."/>
            <person name="Yao Q.A."/>
            <person name="Ye J."/>
            <person name="Yeh R.-F."/>
            <person name="Zaveri J.S."/>
            <person name="Zhan M."/>
            <person name="Zhang G."/>
            <person name="Zhao Q."/>
            <person name="Zheng L."/>
            <person name="Zheng X.H."/>
            <person name="Zhong F.N."/>
            <person name="Zhong W."/>
            <person name="Zhou X."/>
            <person name="Zhu S.C."/>
            <person name="Zhu X."/>
            <person name="Smith H.O."/>
            <person name="Gibbs R.A."/>
            <person name="Myers E.W."/>
            <person name="Rubin G.M."/>
            <person name="Venter J.C."/>
        </authorList>
    </citation>
    <scope>NUCLEOTIDE SEQUENCE [LARGE SCALE GENOMIC DNA]</scope>
    <source>
        <strain>Berkeley</strain>
    </source>
</reference>
<reference key="3">
    <citation type="journal article" date="2002" name="Genome Biol.">
        <title>Annotation of the Drosophila melanogaster euchromatic genome: a systematic review.</title>
        <authorList>
            <person name="Misra S."/>
            <person name="Crosby M.A."/>
            <person name="Mungall C.J."/>
            <person name="Matthews B.B."/>
            <person name="Campbell K.S."/>
            <person name="Hradecky P."/>
            <person name="Huang Y."/>
            <person name="Kaminker J.S."/>
            <person name="Millburn G.H."/>
            <person name="Prochnik S.E."/>
            <person name="Smith C.D."/>
            <person name="Tupy J.L."/>
            <person name="Whitfield E.J."/>
            <person name="Bayraktaroglu L."/>
            <person name="Berman B.P."/>
            <person name="Bettencourt B.R."/>
            <person name="Celniker S.E."/>
            <person name="de Grey A.D.N.J."/>
            <person name="Drysdale R.A."/>
            <person name="Harris N.L."/>
            <person name="Richter J."/>
            <person name="Russo S."/>
            <person name="Schroeder A.J."/>
            <person name="Shu S.Q."/>
            <person name="Stapleton M."/>
            <person name="Yamada C."/>
            <person name="Ashburner M."/>
            <person name="Gelbart W.M."/>
            <person name="Rubin G.M."/>
            <person name="Lewis S.E."/>
        </authorList>
    </citation>
    <scope>GENOME REANNOTATION</scope>
    <source>
        <strain>Berkeley</strain>
    </source>
</reference>
<reference key="4">
    <citation type="journal article" date="2002" name="Genome Biol.">
        <title>A Drosophila full-length cDNA resource.</title>
        <authorList>
            <person name="Stapleton M."/>
            <person name="Carlson J.W."/>
            <person name="Brokstein P."/>
            <person name="Yu C."/>
            <person name="Champe M."/>
            <person name="George R.A."/>
            <person name="Guarin H."/>
            <person name="Kronmiller B."/>
            <person name="Pacleb J.M."/>
            <person name="Park S."/>
            <person name="Wan K.H."/>
            <person name="Rubin G.M."/>
            <person name="Celniker S.E."/>
        </authorList>
    </citation>
    <scope>NUCLEOTIDE SEQUENCE [LARGE SCALE MRNA]</scope>
    <source>
        <strain>Berkeley</strain>
        <tissue>Embryo</tissue>
    </source>
</reference>
<proteinExistence type="inferred from homology"/>
<feature type="chain" id="PRO_0000193590" description="Mitochondrial import inner membrane translocase subunit Tim8">
    <location>
        <begin position="1"/>
        <end position="88"/>
    </location>
</feature>
<feature type="short sequence motif" description="Twin CX3C motif">
    <location>
        <begin position="38"/>
        <end position="61"/>
    </location>
</feature>
<feature type="disulfide bond" evidence="1">
    <location>
        <begin position="38"/>
        <end position="61"/>
    </location>
</feature>
<feature type="disulfide bond" evidence="1">
    <location>
        <begin position="42"/>
        <end position="57"/>
    </location>
</feature>
<gene>
    <name type="primary">Tim8</name>
    <name type="ORF">CG1728</name>
</gene>
<protein>
    <recommendedName>
        <fullName>Mitochondrial import inner membrane translocase subunit Tim8</fullName>
    </recommendedName>
</protein>
<organism>
    <name type="scientific">Drosophila melanogaster</name>
    <name type="common">Fruit fly</name>
    <dbReference type="NCBI Taxonomy" id="7227"/>
    <lineage>
        <taxon>Eukaryota</taxon>
        <taxon>Metazoa</taxon>
        <taxon>Ecdysozoa</taxon>
        <taxon>Arthropoda</taxon>
        <taxon>Hexapoda</taxon>
        <taxon>Insecta</taxon>
        <taxon>Pterygota</taxon>
        <taxon>Neoptera</taxon>
        <taxon>Endopterygota</taxon>
        <taxon>Diptera</taxon>
        <taxon>Brachycera</taxon>
        <taxon>Muscomorpha</taxon>
        <taxon>Ephydroidea</taxon>
        <taxon>Drosophilidae</taxon>
        <taxon>Drosophila</taxon>
        <taxon>Sophophora</taxon>
    </lineage>
</organism>
<dbReference type="EMBL" id="AF142424">
    <property type="protein sequence ID" value="AAD39162.1"/>
    <property type="molecule type" value="mRNA"/>
</dbReference>
<dbReference type="EMBL" id="AE014298">
    <property type="protein sequence ID" value="AAF48036.1"/>
    <property type="molecule type" value="Genomic_DNA"/>
</dbReference>
<dbReference type="EMBL" id="AY118649">
    <property type="protein sequence ID" value="AAM50018.1"/>
    <property type="molecule type" value="mRNA"/>
</dbReference>
<dbReference type="RefSeq" id="NP_001285120.1">
    <property type="nucleotide sequence ID" value="NM_001298191.1"/>
</dbReference>
<dbReference type="RefSeq" id="NP_572713.1">
    <property type="nucleotide sequence ID" value="NM_132485.4"/>
</dbReference>
<dbReference type="SMR" id="Q9Y1A3"/>
<dbReference type="BioGRID" id="58493">
    <property type="interactions" value="15"/>
</dbReference>
<dbReference type="DIP" id="DIP-20805N"/>
<dbReference type="FunCoup" id="Q9Y1A3">
    <property type="interactions" value="1609"/>
</dbReference>
<dbReference type="IntAct" id="Q9Y1A3">
    <property type="interactions" value="11"/>
</dbReference>
<dbReference type="STRING" id="7227.FBpp0310233"/>
<dbReference type="PaxDb" id="7227-FBpp0073338"/>
<dbReference type="DNASU" id="32081"/>
<dbReference type="EnsemblMetazoa" id="FBtr0073482">
    <property type="protein sequence ID" value="FBpp0073338"/>
    <property type="gene ID" value="FBgn0027359"/>
</dbReference>
<dbReference type="EnsemblMetazoa" id="FBtr0343640">
    <property type="protein sequence ID" value="FBpp0310233"/>
    <property type="gene ID" value="FBgn0027359"/>
</dbReference>
<dbReference type="GeneID" id="32081"/>
<dbReference type="KEGG" id="dme:Dmel_CG1728"/>
<dbReference type="UCSC" id="CG1728-RA">
    <property type="organism name" value="d. melanogaster"/>
</dbReference>
<dbReference type="AGR" id="FB:FBgn0027359"/>
<dbReference type="CTD" id="32081"/>
<dbReference type="FlyBase" id="FBgn0027359">
    <property type="gene designation" value="Tim8"/>
</dbReference>
<dbReference type="VEuPathDB" id="VectorBase:FBgn0027359"/>
<dbReference type="eggNOG" id="KOG3489">
    <property type="taxonomic scope" value="Eukaryota"/>
</dbReference>
<dbReference type="HOGENOM" id="CLU_141397_1_2_1"/>
<dbReference type="InParanoid" id="Q9Y1A3"/>
<dbReference type="OMA" id="NEICWDK"/>
<dbReference type="OrthoDB" id="344165at2759"/>
<dbReference type="PhylomeDB" id="Q9Y1A3"/>
<dbReference type="BioGRID-ORCS" id="32081">
    <property type="hits" value="0 hits in 3 CRISPR screens"/>
</dbReference>
<dbReference type="ChiTaRS" id="Tim8">
    <property type="organism name" value="fly"/>
</dbReference>
<dbReference type="GenomeRNAi" id="32081"/>
<dbReference type="PRO" id="PR:Q9Y1A3"/>
<dbReference type="Proteomes" id="UP000000803">
    <property type="component" value="Chromosome X"/>
</dbReference>
<dbReference type="Bgee" id="FBgn0027359">
    <property type="expression patterns" value="Expressed in adult middle midgut class II enteroendocrine cell in adult midgut (Drosophila) and 186 other cell types or tissues"/>
</dbReference>
<dbReference type="ExpressionAtlas" id="Q9Y1A3">
    <property type="expression patterns" value="baseline and differential"/>
</dbReference>
<dbReference type="GO" id="GO:0005743">
    <property type="term" value="C:mitochondrial inner membrane"/>
    <property type="evidence" value="ECO:0007669"/>
    <property type="project" value="UniProtKB-SubCell"/>
</dbReference>
<dbReference type="GO" id="GO:0005758">
    <property type="term" value="C:mitochondrial intermembrane space"/>
    <property type="evidence" value="ECO:0000250"/>
    <property type="project" value="FlyBase"/>
</dbReference>
<dbReference type="GO" id="GO:0042719">
    <property type="term" value="C:mitochondrial intermembrane space protein transporter complex"/>
    <property type="evidence" value="ECO:0000250"/>
    <property type="project" value="FlyBase"/>
</dbReference>
<dbReference type="GO" id="GO:0005739">
    <property type="term" value="C:mitochondrion"/>
    <property type="evidence" value="ECO:0007005"/>
    <property type="project" value="FlyBase"/>
</dbReference>
<dbReference type="GO" id="GO:0046872">
    <property type="term" value="F:metal ion binding"/>
    <property type="evidence" value="ECO:0007669"/>
    <property type="project" value="UniProtKB-KW"/>
</dbReference>
<dbReference type="GO" id="GO:0140318">
    <property type="term" value="F:protein transporter activity"/>
    <property type="evidence" value="ECO:0000250"/>
    <property type="project" value="FlyBase"/>
</dbReference>
<dbReference type="GO" id="GO:0045039">
    <property type="term" value="P:protein insertion into mitochondrial inner membrane"/>
    <property type="evidence" value="ECO:0000250"/>
    <property type="project" value="FlyBase"/>
</dbReference>
<dbReference type="FunFam" id="1.10.287.810:FF:000005">
    <property type="entry name" value="Mitochondrial import inner membrane translocase subunit Tim8 B"/>
    <property type="match status" value="1"/>
</dbReference>
<dbReference type="Gene3D" id="1.10.287.810">
    <property type="entry name" value="Mitochondrial import inner membrane translocase subunit tim13 like domains"/>
    <property type="match status" value="1"/>
</dbReference>
<dbReference type="InterPro" id="IPR004217">
    <property type="entry name" value="Tim10-like"/>
</dbReference>
<dbReference type="InterPro" id="IPR035427">
    <property type="entry name" value="Tim10-like_dom_sf"/>
</dbReference>
<dbReference type="Pfam" id="PF02953">
    <property type="entry name" value="zf-Tim10_DDP"/>
    <property type="match status" value="1"/>
</dbReference>
<dbReference type="SUPFAM" id="SSF144122">
    <property type="entry name" value="Tim10-like"/>
    <property type="match status" value="1"/>
</dbReference>
<evidence type="ECO:0000250" key="1"/>
<evidence type="ECO:0000305" key="2"/>
<sequence>MSDFENLSGNDKELQEFLLIEKQKAQVNAQIHEFNEICWEKCIGKPSTKLDHATETCLSNCVDRFIDTSLLITQRFAQMLQKRGGGDL</sequence>
<name>TIM8_DROME</name>
<keyword id="KW-0143">Chaperone</keyword>
<keyword id="KW-1015">Disulfide bond</keyword>
<keyword id="KW-0472">Membrane</keyword>
<keyword id="KW-0479">Metal-binding</keyword>
<keyword id="KW-0496">Mitochondrion</keyword>
<keyword id="KW-0999">Mitochondrion inner membrane</keyword>
<keyword id="KW-0653">Protein transport</keyword>
<keyword id="KW-1185">Reference proteome</keyword>
<keyword id="KW-0811">Translocation</keyword>
<keyword id="KW-0813">Transport</keyword>
<keyword id="KW-0862">Zinc</keyword>
<comment type="function">
    <text evidence="1">Mitochondrial intermembrane chaperone that participates in the import and insertion of some multi-pass transmembrane proteins into the mitochondrial inner membrane. Also required for the transfer of beta-barrel precursors from the TOM complex to the sorting and assembly machinery (SAM complex) of the outer membrane. Acts as a chaperone-like protein that protects the hydrophobic precursors from aggregation and guide them through the mitochondrial intermembrane space. The Tim8-Tim13 complex mediates the import of some proteins while the predominant Tim9-Tim10 70 kDa complex mediates the import of much more proteins (By similarity).</text>
</comment>
<comment type="subunit">
    <text evidence="1">Heterohexamer; composed of 3 copies of Tim8 and 3 copies of Tim13, named soluble 70 kDa complex. Associates with the TIM22 complex, whose core is composed of Tim22 (By similarity).</text>
</comment>
<comment type="subcellular location">
    <subcellularLocation>
        <location evidence="1">Mitochondrion inner membrane</location>
        <topology evidence="1">Peripheral membrane protein</topology>
        <orientation evidence="1">Intermembrane side</orientation>
    </subcellularLocation>
</comment>
<comment type="domain">
    <text evidence="1">The twin CX3C motif contains 4 conserved Cys residues that form 2 disulfide bonds in the mitochondrial intermembrane space. However, during the transit of Tim8 from cytoplasm into mitochondrion, the Cys residues probably coordinate zinc, thereby preventing folding and allowing its transfer across mitochondrial outer membrane (By similarity).</text>
</comment>
<comment type="similarity">
    <text evidence="2">Belongs to the small Tim family.</text>
</comment>